<protein>
    <recommendedName>
        <fullName>Beta-glucosidase A</fullName>
        <ecNumber>3.2.1.21</ecNumber>
    </recommendedName>
    <alternativeName>
        <fullName>Beta-D-glucoside glucohydrolase</fullName>
    </alternativeName>
    <alternativeName>
        <fullName>Cellobiase</fullName>
    </alternativeName>
    <alternativeName>
        <fullName>Gentiobiase</fullName>
    </alternativeName>
</protein>
<sequence>MNVKKFPEGFLWGVATASYQIEGSPLADGAGMSIWHTFSHTPGNVKNGDTGDVACDHYNRWKEDIEIIEKLGVKAYRFSISWPRILPEGTGRVNQKGLDFYNRIIDTLLEKGITPFVTIYHWDLPFALQLKGGWANREIADWFAEYSRVLFENFGDRVKNWITLNEPWVVAIVGHLYGVHAPGMRDIYVAFRAVHNLLRAHARAVKVFRETVKDGKIGIVFNNGYFEPASEKEEDIRAVRFMHQFNNYPLFLNPIYRGDYPELVLEFAREYLPENYKDDMSEIQEKIDFVGLNYYSGHLVKFDPDAPAKVSFVERDLPKTAMGWEIVPEGIYWILKKVKEEYNPPEVYITENGAAFDDVVSEDGRVHDQNRIDYLKAHIGQAWKAIQEGVPLKGYFVWSLLDNFEWAEGYSKRFGIVYVDYSTQKRIVKDSGYWYSNVVKNNGLED</sequence>
<accession>Q08638</accession>
<reference key="1">
    <citation type="journal article" date="1994" name="Mol. Gen. Genet.">
        <title>Comparative amino acid sequence analysis of Thermotoga maritima beta-glucosidase (BglA) deduced from the nucleotide sequence of the gene indicates distant relationship between beta-glucosidases of the BGA family and other families of beta-1,4-glycosyl hydrolases.</title>
        <authorList>
            <person name="Liebl W."/>
            <person name="Gabelsberger J."/>
            <person name="Schleifer K.H."/>
        </authorList>
    </citation>
    <scope>NUCLEOTIDE SEQUENCE [GENOMIC DNA]</scope>
    <source>
        <strain>ATCC 43589 / DSM 3109 / JCM 10099 / NBRC 100826 / MSB8</strain>
    </source>
</reference>
<proteinExistence type="evidence at protein level"/>
<dbReference type="EC" id="3.2.1.21"/>
<dbReference type="EMBL" id="X74163">
    <property type="protein sequence ID" value="CAA52276.1"/>
    <property type="molecule type" value="Genomic_DNA"/>
</dbReference>
<dbReference type="PIR" id="S41561">
    <property type="entry name" value="S34570"/>
</dbReference>
<dbReference type="RefSeq" id="WP_004082398.1">
    <property type="nucleotide sequence ID" value="NC_021214.1"/>
</dbReference>
<dbReference type="PDB" id="1OD0">
    <property type="method" value="X-ray"/>
    <property type="resolution" value="2.11 A"/>
    <property type="chains" value="A/B=2-446"/>
</dbReference>
<dbReference type="PDB" id="1OIF">
    <property type="method" value="X-ray"/>
    <property type="resolution" value="2.12 A"/>
    <property type="chains" value="A/B=2-446"/>
</dbReference>
<dbReference type="PDB" id="1OIM">
    <property type="method" value="X-ray"/>
    <property type="resolution" value="2.15 A"/>
    <property type="chains" value="A/B=2-446"/>
</dbReference>
<dbReference type="PDB" id="1OIN">
    <property type="method" value="X-ray"/>
    <property type="resolution" value="2.15 A"/>
    <property type="chains" value="A/B=2-446"/>
</dbReference>
<dbReference type="PDB" id="1UZ1">
    <property type="method" value="X-ray"/>
    <property type="resolution" value="2.00 A"/>
    <property type="chains" value="A/B=2-446"/>
</dbReference>
<dbReference type="PDB" id="1W3J">
    <property type="method" value="X-ray"/>
    <property type="resolution" value="2.00 A"/>
    <property type="chains" value="A/B=2-446"/>
</dbReference>
<dbReference type="PDB" id="2CBU">
    <property type="method" value="X-ray"/>
    <property type="resolution" value="1.85 A"/>
    <property type="chains" value="A/B=2-446"/>
</dbReference>
<dbReference type="PDB" id="2CBV">
    <property type="method" value="X-ray"/>
    <property type="resolution" value="1.95 A"/>
    <property type="chains" value="A/B=2-446"/>
</dbReference>
<dbReference type="PDB" id="2CES">
    <property type="method" value="X-ray"/>
    <property type="resolution" value="2.15 A"/>
    <property type="chains" value="A/B=2-446"/>
</dbReference>
<dbReference type="PDB" id="2CET">
    <property type="method" value="X-ray"/>
    <property type="resolution" value="1.97 A"/>
    <property type="chains" value="A/B=2-446"/>
</dbReference>
<dbReference type="PDB" id="2J75">
    <property type="method" value="X-ray"/>
    <property type="resolution" value="1.85 A"/>
    <property type="chains" value="A/B=2-446"/>
</dbReference>
<dbReference type="PDB" id="2J77">
    <property type="method" value="X-ray"/>
    <property type="resolution" value="2.10 A"/>
    <property type="chains" value="A/B=2-446"/>
</dbReference>
<dbReference type="PDB" id="2J78">
    <property type="method" value="X-ray"/>
    <property type="resolution" value="1.65 A"/>
    <property type="chains" value="A/B=2-446"/>
</dbReference>
<dbReference type="PDB" id="2J79">
    <property type="method" value="X-ray"/>
    <property type="resolution" value="1.94 A"/>
    <property type="chains" value="A/B=2-446"/>
</dbReference>
<dbReference type="PDB" id="2J7B">
    <property type="method" value="X-ray"/>
    <property type="resolution" value="1.87 A"/>
    <property type="chains" value="A/B=2-446"/>
</dbReference>
<dbReference type="PDB" id="2J7C">
    <property type="method" value="X-ray"/>
    <property type="resolution" value="2.09 A"/>
    <property type="chains" value="A/B=2-446"/>
</dbReference>
<dbReference type="PDB" id="2J7D">
    <property type="method" value="X-ray"/>
    <property type="resolution" value="2.24 A"/>
    <property type="chains" value="A/B=2-446"/>
</dbReference>
<dbReference type="PDB" id="2J7E">
    <property type="method" value="X-ray"/>
    <property type="resolution" value="2.19 A"/>
    <property type="chains" value="A/B=2-446"/>
</dbReference>
<dbReference type="PDB" id="2J7F">
    <property type="method" value="X-ray"/>
    <property type="resolution" value="2.28 A"/>
    <property type="chains" value="A/B=2-446"/>
</dbReference>
<dbReference type="PDB" id="2J7G">
    <property type="method" value="X-ray"/>
    <property type="resolution" value="1.91 A"/>
    <property type="chains" value="A/B=2-446"/>
</dbReference>
<dbReference type="PDB" id="2J7H">
    <property type="method" value="X-ray"/>
    <property type="resolution" value="1.95 A"/>
    <property type="chains" value="A/B=2-446"/>
</dbReference>
<dbReference type="PDB" id="2JAL">
    <property type="method" value="X-ray"/>
    <property type="resolution" value="1.90 A"/>
    <property type="chains" value="A/B=2-446"/>
</dbReference>
<dbReference type="PDB" id="2VRJ">
    <property type="method" value="X-ray"/>
    <property type="resolution" value="1.90 A"/>
    <property type="chains" value="A/B=2-446"/>
</dbReference>
<dbReference type="PDB" id="2WBG">
    <property type="method" value="X-ray"/>
    <property type="resolution" value="1.85 A"/>
    <property type="chains" value="A/B/C/D=2-446"/>
</dbReference>
<dbReference type="PDB" id="2WC3">
    <property type="method" value="X-ray"/>
    <property type="resolution" value="2.00 A"/>
    <property type="chains" value="A/B/C/D=2-446"/>
</dbReference>
<dbReference type="PDB" id="2WC4">
    <property type="method" value="X-ray"/>
    <property type="resolution" value="1.70 A"/>
    <property type="chains" value="A/B/C/D=2-446"/>
</dbReference>
<dbReference type="PDB" id="4GXP">
    <property type="method" value="X-ray"/>
    <property type="resolution" value="3.00 A"/>
    <property type="chains" value="A/B/C=1-160, A/B/C=204-217, A/B/C=352-380, A/B/C=395-446"/>
</dbReference>
<dbReference type="PDB" id="5N6S">
    <property type="method" value="X-ray"/>
    <property type="resolution" value="2.10 A"/>
    <property type="chains" value="A/B/C/D=2-446"/>
</dbReference>
<dbReference type="PDB" id="5N6T">
    <property type="method" value="X-ray"/>
    <property type="resolution" value="2.10 A"/>
    <property type="chains" value="A/B=2-446"/>
</dbReference>
<dbReference type="PDB" id="5OSS">
    <property type="method" value="X-ray"/>
    <property type="resolution" value="1.70 A"/>
    <property type="chains" value="A/B=2-446"/>
</dbReference>
<dbReference type="PDBsum" id="1OD0"/>
<dbReference type="PDBsum" id="1OIF"/>
<dbReference type="PDBsum" id="1OIM"/>
<dbReference type="PDBsum" id="1OIN"/>
<dbReference type="PDBsum" id="1UZ1"/>
<dbReference type="PDBsum" id="1W3J"/>
<dbReference type="PDBsum" id="2CBU"/>
<dbReference type="PDBsum" id="2CBV"/>
<dbReference type="PDBsum" id="2CES"/>
<dbReference type="PDBsum" id="2CET"/>
<dbReference type="PDBsum" id="2J75"/>
<dbReference type="PDBsum" id="2J77"/>
<dbReference type="PDBsum" id="2J78"/>
<dbReference type="PDBsum" id="2J79"/>
<dbReference type="PDBsum" id="2J7B"/>
<dbReference type="PDBsum" id="2J7C"/>
<dbReference type="PDBsum" id="2J7D"/>
<dbReference type="PDBsum" id="2J7E"/>
<dbReference type="PDBsum" id="2J7F"/>
<dbReference type="PDBsum" id="2J7G"/>
<dbReference type="PDBsum" id="2J7H"/>
<dbReference type="PDBsum" id="2JAL"/>
<dbReference type="PDBsum" id="2VRJ"/>
<dbReference type="PDBsum" id="2WBG"/>
<dbReference type="PDBsum" id="2WC3"/>
<dbReference type="PDBsum" id="2WC4"/>
<dbReference type="PDBsum" id="4GXP"/>
<dbReference type="PDBsum" id="5N6S"/>
<dbReference type="PDBsum" id="5N6T"/>
<dbReference type="PDBsum" id="5OSS"/>
<dbReference type="SMR" id="Q08638"/>
<dbReference type="DrugBank" id="DB08260">
    <property type="generic name" value="(1S,2R,3S,4R,5R)-2,3,4-trihydroxy-N-octyl-6-oxa-8-azabicyclo[3.2.1]octane-8-carbothioamide"/>
</dbReference>
<dbReference type="DrugBank" id="DB08090">
    <property type="generic name" value="(3Z,5S,6R,7S,8R,8aR)-3-(octylimino)hexahydro[1,3]oxazolo[3,4-a]pyridine-5,6,7,8-tetrol"/>
</dbReference>
<dbReference type="DrugBank" id="DB07370">
    <property type="generic name" value="(3Z,5S,6R,7S,8R,8aS)-3-(octylimino)hexahydro[1,3]thiazolo[3,4-a]pyridine-5,6,7,8-tetrol"/>
</dbReference>
<dbReference type="DrugBank" id="DB07367">
    <property type="generic name" value="(3Z,5S,6R,7S,8S,8aR)-3-(octylimino)hexahydro[1,3]oxazolo[3,4-a]pyridine-5,6,7,8-tetrol"/>
</dbReference>
<dbReference type="DrugBank" id="DB04545">
    <property type="generic name" value="Afegostat"/>
</dbReference>
<dbReference type="DrugBank" id="DB04658">
    <property type="generic name" value="Calystegine B2"/>
</dbReference>
<dbReference type="DrugBank" id="DB03206">
    <property type="generic name" value="Duvoglustat"/>
</dbReference>
<dbReference type="DrugBank" id="DB03862">
    <property type="generic name" value="Tetrahydrooxazine"/>
</dbReference>
<dbReference type="CAZy" id="GH1">
    <property type="family name" value="Glycoside Hydrolase Family 1"/>
</dbReference>
<dbReference type="PaxDb" id="243274-THEMA_04935"/>
<dbReference type="KEGG" id="tmi:THEMA_04935"/>
<dbReference type="KEGG" id="tmw:THMA_1897"/>
<dbReference type="PATRIC" id="fig|243274.18.peg.955"/>
<dbReference type="eggNOG" id="COG2723">
    <property type="taxonomic scope" value="Bacteria"/>
</dbReference>
<dbReference type="UniPathway" id="UPA00696"/>
<dbReference type="EvolutionaryTrace" id="Q08638"/>
<dbReference type="GO" id="GO:0008422">
    <property type="term" value="F:beta-glucosidase activity"/>
    <property type="evidence" value="ECO:0007669"/>
    <property type="project" value="UniProtKB-EC"/>
</dbReference>
<dbReference type="GO" id="GO:0030245">
    <property type="term" value="P:cellulose catabolic process"/>
    <property type="evidence" value="ECO:0007669"/>
    <property type="project" value="UniProtKB-UniPathway"/>
</dbReference>
<dbReference type="FunFam" id="3.20.20.80:FF:000004">
    <property type="entry name" value="Beta-glucosidase 6-phospho-beta-glucosidase"/>
    <property type="match status" value="1"/>
</dbReference>
<dbReference type="Gene3D" id="3.20.20.80">
    <property type="entry name" value="Glycosidases"/>
    <property type="match status" value="1"/>
</dbReference>
<dbReference type="InterPro" id="IPR001360">
    <property type="entry name" value="Glyco_hydro_1"/>
</dbReference>
<dbReference type="InterPro" id="IPR018120">
    <property type="entry name" value="Glyco_hydro_1_AS"/>
</dbReference>
<dbReference type="InterPro" id="IPR017736">
    <property type="entry name" value="Glyco_hydro_1_beta-glucosidase"/>
</dbReference>
<dbReference type="InterPro" id="IPR033132">
    <property type="entry name" value="Glyco_hydro_1_N_CS"/>
</dbReference>
<dbReference type="InterPro" id="IPR017853">
    <property type="entry name" value="Glycoside_hydrolase_SF"/>
</dbReference>
<dbReference type="NCBIfam" id="TIGR03356">
    <property type="entry name" value="BGL"/>
    <property type="match status" value="1"/>
</dbReference>
<dbReference type="PANTHER" id="PTHR10353">
    <property type="entry name" value="GLYCOSYL HYDROLASE"/>
    <property type="match status" value="1"/>
</dbReference>
<dbReference type="PANTHER" id="PTHR10353:SF36">
    <property type="entry name" value="LP05116P"/>
    <property type="match status" value="1"/>
</dbReference>
<dbReference type="Pfam" id="PF00232">
    <property type="entry name" value="Glyco_hydro_1"/>
    <property type="match status" value="1"/>
</dbReference>
<dbReference type="PRINTS" id="PR00131">
    <property type="entry name" value="GLHYDRLASE1"/>
</dbReference>
<dbReference type="SUPFAM" id="SSF51445">
    <property type="entry name" value="(Trans)glycosidases"/>
    <property type="match status" value="1"/>
</dbReference>
<dbReference type="PROSITE" id="PS00572">
    <property type="entry name" value="GLYCOSYL_HYDROL_F1_1"/>
    <property type="match status" value="1"/>
</dbReference>
<dbReference type="PROSITE" id="PS00653">
    <property type="entry name" value="GLYCOSYL_HYDROL_F1_2"/>
    <property type="match status" value="1"/>
</dbReference>
<evidence type="ECO:0000255" key="1"/>
<evidence type="ECO:0000255" key="2">
    <source>
        <dbReference type="PROSITE-ProRule" id="PRU10055"/>
    </source>
</evidence>
<evidence type="ECO:0000305" key="3"/>
<evidence type="ECO:0007829" key="4">
    <source>
        <dbReference type="PDB" id="2J78"/>
    </source>
</evidence>
<evidence type="ECO:0007829" key="5">
    <source>
        <dbReference type="PDB" id="2WC4"/>
    </source>
</evidence>
<evidence type="ECO:0007829" key="6">
    <source>
        <dbReference type="PDB" id="5N6S"/>
    </source>
</evidence>
<organism>
    <name type="scientific">Thermotoga maritima (strain ATCC 43589 / DSM 3109 / JCM 10099 / NBRC 100826 / MSB8)</name>
    <dbReference type="NCBI Taxonomy" id="243274"/>
    <lineage>
        <taxon>Bacteria</taxon>
        <taxon>Thermotogati</taxon>
        <taxon>Thermotogota</taxon>
        <taxon>Thermotogae</taxon>
        <taxon>Thermotogales</taxon>
        <taxon>Thermotogaceae</taxon>
        <taxon>Thermotoga</taxon>
    </lineage>
</organism>
<feature type="chain" id="PRO_0000063879" description="Beta-glucosidase A">
    <location>
        <begin position="1"/>
        <end position="446"/>
    </location>
</feature>
<feature type="active site" description="Proton donor" evidence="1">
    <location>
        <position position="166"/>
    </location>
</feature>
<feature type="active site" description="Nucleophile" evidence="2">
    <location>
        <position position="351"/>
    </location>
</feature>
<feature type="strand" evidence="4">
    <location>
        <begin position="11"/>
        <end position="15"/>
    </location>
</feature>
<feature type="helix" evidence="4">
    <location>
        <begin position="18"/>
        <end position="21"/>
    </location>
</feature>
<feature type="helix" evidence="4">
    <location>
        <begin position="27"/>
        <end position="29"/>
    </location>
</feature>
<feature type="helix" evidence="4">
    <location>
        <begin position="34"/>
        <end position="39"/>
    </location>
</feature>
<feature type="helix" evidence="4">
    <location>
        <begin position="46"/>
        <end position="48"/>
    </location>
</feature>
<feature type="strand" evidence="4">
    <location>
        <begin position="51"/>
        <end position="53"/>
    </location>
</feature>
<feature type="helix" evidence="4">
    <location>
        <begin position="57"/>
        <end position="70"/>
    </location>
</feature>
<feature type="strand" evidence="4">
    <location>
        <begin position="75"/>
        <end position="79"/>
    </location>
</feature>
<feature type="helix" evidence="4">
    <location>
        <begin position="82"/>
        <end position="85"/>
    </location>
</feature>
<feature type="strand" evidence="4">
    <location>
        <begin position="89"/>
        <end position="91"/>
    </location>
</feature>
<feature type="helix" evidence="4">
    <location>
        <begin position="95"/>
        <end position="110"/>
    </location>
</feature>
<feature type="strand" evidence="4">
    <location>
        <begin position="114"/>
        <end position="122"/>
    </location>
</feature>
<feature type="helix" evidence="4">
    <location>
        <begin position="126"/>
        <end position="129"/>
    </location>
</feature>
<feature type="turn" evidence="4">
    <location>
        <begin position="130"/>
        <end position="132"/>
    </location>
</feature>
<feature type="helix" evidence="4">
    <location>
        <begin position="133"/>
        <end position="135"/>
    </location>
</feature>
<feature type="helix" evidence="4">
    <location>
        <begin position="139"/>
        <end position="154"/>
    </location>
</feature>
<feature type="turn" evidence="4">
    <location>
        <begin position="155"/>
        <end position="157"/>
    </location>
</feature>
<feature type="strand" evidence="4">
    <location>
        <begin position="160"/>
        <end position="165"/>
    </location>
</feature>
<feature type="helix" evidence="4">
    <location>
        <begin position="167"/>
        <end position="175"/>
    </location>
</feature>
<feature type="helix" evidence="4">
    <location>
        <begin position="187"/>
        <end position="211"/>
    </location>
</feature>
<feature type="strand" evidence="4">
    <location>
        <begin position="216"/>
        <end position="231"/>
    </location>
</feature>
<feature type="helix" evidence="4">
    <location>
        <begin position="233"/>
        <end position="246"/>
    </location>
</feature>
<feature type="helix" evidence="4">
    <location>
        <begin position="249"/>
        <end position="257"/>
    </location>
</feature>
<feature type="helix" evidence="4">
    <location>
        <begin position="262"/>
        <end position="268"/>
    </location>
</feature>
<feature type="helix" evidence="4">
    <location>
        <begin position="269"/>
        <end position="271"/>
    </location>
</feature>
<feature type="helix" evidence="4">
    <location>
        <begin position="276"/>
        <end position="279"/>
    </location>
</feature>
<feature type="helix" evidence="4">
    <location>
        <begin position="280"/>
        <end position="283"/>
    </location>
</feature>
<feature type="strand" evidence="4">
    <location>
        <begin position="288"/>
        <end position="302"/>
    </location>
</feature>
<feature type="strand" evidence="6">
    <location>
        <begin position="304"/>
        <end position="306"/>
    </location>
</feature>
<feature type="helix" evidence="5">
    <location>
        <begin position="307"/>
        <end position="309"/>
    </location>
</feature>
<feature type="strand" evidence="4">
    <location>
        <begin position="310"/>
        <end position="313"/>
    </location>
</feature>
<feature type="helix" evidence="4">
    <location>
        <begin position="329"/>
        <end position="342"/>
    </location>
</feature>
<feature type="strand" evidence="4">
    <location>
        <begin position="347"/>
        <end position="352"/>
    </location>
</feature>
<feature type="helix" evidence="4">
    <location>
        <begin position="369"/>
        <end position="387"/>
    </location>
</feature>
<feature type="strand" evidence="4">
    <location>
        <begin position="392"/>
        <end position="398"/>
    </location>
</feature>
<feature type="helix" evidence="4">
    <location>
        <begin position="406"/>
        <end position="411"/>
    </location>
</feature>
<feature type="strand" evidence="4">
    <location>
        <begin position="416"/>
        <end position="419"/>
    </location>
</feature>
<feature type="turn" evidence="4">
    <location>
        <begin position="421"/>
        <end position="423"/>
    </location>
</feature>
<feature type="strand" evidence="4">
    <location>
        <begin position="426"/>
        <end position="428"/>
    </location>
</feature>
<feature type="helix" evidence="4">
    <location>
        <begin position="430"/>
        <end position="441"/>
    </location>
</feature>
<keyword id="KW-0002">3D-structure</keyword>
<keyword id="KW-0119">Carbohydrate metabolism</keyword>
<keyword id="KW-0136">Cellulose degradation</keyword>
<keyword id="KW-0326">Glycosidase</keyword>
<keyword id="KW-0378">Hydrolase</keyword>
<keyword id="KW-0624">Polysaccharide degradation</keyword>
<gene>
    <name type="primary">bglA</name>
</gene>
<comment type="catalytic activity">
    <reaction>
        <text>Hydrolysis of terminal, non-reducing beta-D-glucosyl residues with release of beta-D-glucose.</text>
        <dbReference type="EC" id="3.2.1.21"/>
    </reaction>
</comment>
<comment type="pathway">
    <text>Glycan metabolism; cellulose degradation.</text>
</comment>
<comment type="similarity">
    <text evidence="3">Belongs to the glycosyl hydrolase 1 family.</text>
</comment>
<comment type="caution">
    <text evidence="3">As the DNA coding for this protein is not found in the complete genome of T.maritima. It could have originated from another bacterial species.</text>
</comment>
<name>BGLA_THEMA</name>